<organism>
    <name type="scientific">Haemophilus influenzae (strain 86-028NP)</name>
    <dbReference type="NCBI Taxonomy" id="281310"/>
    <lineage>
        <taxon>Bacteria</taxon>
        <taxon>Pseudomonadati</taxon>
        <taxon>Pseudomonadota</taxon>
        <taxon>Gammaproteobacteria</taxon>
        <taxon>Pasteurellales</taxon>
        <taxon>Pasteurellaceae</taxon>
        <taxon>Haemophilus</taxon>
    </lineage>
</organism>
<accession>Q4QMG5</accession>
<gene>
    <name evidence="1" type="primary">proS</name>
    <name type="ordered locus">NTHI0888</name>
</gene>
<protein>
    <recommendedName>
        <fullName evidence="1">Proline--tRNA ligase</fullName>
        <ecNumber evidence="1">6.1.1.15</ecNumber>
    </recommendedName>
    <alternativeName>
        <fullName evidence="1">Prolyl-tRNA synthetase</fullName>
        <shortName evidence="1">ProRS</shortName>
    </alternativeName>
</protein>
<dbReference type="EC" id="6.1.1.15" evidence="1"/>
<dbReference type="EMBL" id="CP000057">
    <property type="protein sequence ID" value="AAX87782.1"/>
    <property type="molecule type" value="Genomic_DNA"/>
</dbReference>
<dbReference type="RefSeq" id="WP_005689016.1">
    <property type="nucleotide sequence ID" value="NC_007146.2"/>
</dbReference>
<dbReference type="SMR" id="Q4QMG5"/>
<dbReference type="GeneID" id="93219769"/>
<dbReference type="KEGG" id="hit:NTHI0888"/>
<dbReference type="HOGENOM" id="CLU_016739_0_0_6"/>
<dbReference type="Proteomes" id="UP000002525">
    <property type="component" value="Chromosome"/>
</dbReference>
<dbReference type="GO" id="GO:0005829">
    <property type="term" value="C:cytosol"/>
    <property type="evidence" value="ECO:0007669"/>
    <property type="project" value="TreeGrafter"/>
</dbReference>
<dbReference type="GO" id="GO:0002161">
    <property type="term" value="F:aminoacyl-tRNA deacylase activity"/>
    <property type="evidence" value="ECO:0007669"/>
    <property type="project" value="InterPro"/>
</dbReference>
<dbReference type="GO" id="GO:0005524">
    <property type="term" value="F:ATP binding"/>
    <property type="evidence" value="ECO:0007669"/>
    <property type="project" value="UniProtKB-UniRule"/>
</dbReference>
<dbReference type="GO" id="GO:0004827">
    <property type="term" value="F:proline-tRNA ligase activity"/>
    <property type="evidence" value="ECO:0007669"/>
    <property type="project" value="UniProtKB-UniRule"/>
</dbReference>
<dbReference type="GO" id="GO:0006433">
    <property type="term" value="P:prolyl-tRNA aminoacylation"/>
    <property type="evidence" value="ECO:0007669"/>
    <property type="project" value="UniProtKB-UniRule"/>
</dbReference>
<dbReference type="CDD" id="cd04334">
    <property type="entry name" value="ProRS-INS"/>
    <property type="match status" value="1"/>
</dbReference>
<dbReference type="CDD" id="cd00861">
    <property type="entry name" value="ProRS_anticodon_short"/>
    <property type="match status" value="1"/>
</dbReference>
<dbReference type="CDD" id="cd00779">
    <property type="entry name" value="ProRS_core_prok"/>
    <property type="match status" value="1"/>
</dbReference>
<dbReference type="FunFam" id="3.30.930.10:FF:000043">
    <property type="entry name" value="Proline--tRNA ligase"/>
    <property type="match status" value="1"/>
</dbReference>
<dbReference type="FunFam" id="3.30.930.10:FF:000097">
    <property type="entry name" value="Proline--tRNA ligase"/>
    <property type="match status" value="1"/>
</dbReference>
<dbReference type="FunFam" id="3.40.50.800:FF:000057">
    <property type="entry name" value="Proline--tRNA ligase"/>
    <property type="match status" value="1"/>
</dbReference>
<dbReference type="Gene3D" id="3.40.50.800">
    <property type="entry name" value="Anticodon-binding domain"/>
    <property type="match status" value="1"/>
</dbReference>
<dbReference type="Gene3D" id="3.30.930.10">
    <property type="entry name" value="Bira Bifunctional Protein, Domain 2"/>
    <property type="match status" value="2"/>
</dbReference>
<dbReference type="HAMAP" id="MF_01569">
    <property type="entry name" value="Pro_tRNA_synth_type1"/>
    <property type="match status" value="1"/>
</dbReference>
<dbReference type="InterPro" id="IPR002314">
    <property type="entry name" value="aa-tRNA-synt_IIb"/>
</dbReference>
<dbReference type="InterPro" id="IPR006195">
    <property type="entry name" value="aa-tRNA-synth_II"/>
</dbReference>
<dbReference type="InterPro" id="IPR045864">
    <property type="entry name" value="aa-tRNA-synth_II/BPL/LPL"/>
</dbReference>
<dbReference type="InterPro" id="IPR004154">
    <property type="entry name" value="Anticodon-bd"/>
</dbReference>
<dbReference type="InterPro" id="IPR036621">
    <property type="entry name" value="Anticodon-bd_dom_sf"/>
</dbReference>
<dbReference type="InterPro" id="IPR002316">
    <property type="entry name" value="Pro-tRNA-ligase_IIa"/>
</dbReference>
<dbReference type="InterPro" id="IPR004500">
    <property type="entry name" value="Pro-tRNA-synth_IIa_bac-type"/>
</dbReference>
<dbReference type="InterPro" id="IPR023717">
    <property type="entry name" value="Pro-tRNA-Synthase_IIa_type1"/>
</dbReference>
<dbReference type="InterPro" id="IPR050062">
    <property type="entry name" value="Pro-tRNA_synthetase"/>
</dbReference>
<dbReference type="InterPro" id="IPR044140">
    <property type="entry name" value="ProRS_anticodon_short"/>
</dbReference>
<dbReference type="InterPro" id="IPR033730">
    <property type="entry name" value="ProRS_core_prok"/>
</dbReference>
<dbReference type="InterPro" id="IPR036754">
    <property type="entry name" value="YbaK/aa-tRNA-synt-asso_dom_sf"/>
</dbReference>
<dbReference type="InterPro" id="IPR007214">
    <property type="entry name" value="YbaK/aa-tRNA-synth-assoc-dom"/>
</dbReference>
<dbReference type="NCBIfam" id="NF006625">
    <property type="entry name" value="PRK09194.1"/>
    <property type="match status" value="1"/>
</dbReference>
<dbReference type="NCBIfam" id="TIGR00409">
    <property type="entry name" value="proS_fam_II"/>
    <property type="match status" value="1"/>
</dbReference>
<dbReference type="PANTHER" id="PTHR42753">
    <property type="entry name" value="MITOCHONDRIAL RIBOSOME PROTEIN L39/PROLYL-TRNA LIGASE FAMILY MEMBER"/>
    <property type="match status" value="1"/>
</dbReference>
<dbReference type="PANTHER" id="PTHR42753:SF2">
    <property type="entry name" value="PROLINE--TRNA LIGASE"/>
    <property type="match status" value="1"/>
</dbReference>
<dbReference type="Pfam" id="PF03129">
    <property type="entry name" value="HGTP_anticodon"/>
    <property type="match status" value="1"/>
</dbReference>
<dbReference type="Pfam" id="PF00587">
    <property type="entry name" value="tRNA-synt_2b"/>
    <property type="match status" value="1"/>
</dbReference>
<dbReference type="Pfam" id="PF04073">
    <property type="entry name" value="tRNA_edit"/>
    <property type="match status" value="1"/>
</dbReference>
<dbReference type="PIRSF" id="PIRSF001535">
    <property type="entry name" value="ProRS_1"/>
    <property type="match status" value="1"/>
</dbReference>
<dbReference type="PRINTS" id="PR01046">
    <property type="entry name" value="TRNASYNTHPRO"/>
</dbReference>
<dbReference type="SUPFAM" id="SSF52954">
    <property type="entry name" value="Class II aaRS ABD-related"/>
    <property type="match status" value="1"/>
</dbReference>
<dbReference type="SUPFAM" id="SSF55681">
    <property type="entry name" value="Class II aaRS and biotin synthetases"/>
    <property type="match status" value="1"/>
</dbReference>
<dbReference type="SUPFAM" id="SSF55826">
    <property type="entry name" value="YbaK/ProRS associated domain"/>
    <property type="match status" value="1"/>
</dbReference>
<dbReference type="PROSITE" id="PS50862">
    <property type="entry name" value="AA_TRNA_LIGASE_II"/>
    <property type="match status" value="1"/>
</dbReference>
<evidence type="ECO:0000255" key="1">
    <source>
        <dbReference type="HAMAP-Rule" id="MF_01569"/>
    </source>
</evidence>
<proteinExistence type="inferred from homology"/>
<comment type="function">
    <text evidence="1">Catalyzes the attachment of proline to tRNA(Pro) in a two-step reaction: proline is first activated by ATP to form Pro-AMP and then transferred to the acceptor end of tRNA(Pro). As ProRS can inadvertently accommodate and process non-cognate amino acids such as alanine and cysteine, to avoid such errors it has two additional distinct editing activities against alanine. One activity is designated as 'pretransfer' editing and involves the tRNA(Pro)-independent hydrolysis of activated Ala-AMP. The other activity is designated 'posttransfer' editing and involves deacylation of mischarged Ala-tRNA(Pro). The misacylated Cys-tRNA(Pro) is not edited by ProRS.</text>
</comment>
<comment type="catalytic activity">
    <reaction evidence="1">
        <text>tRNA(Pro) + L-proline + ATP = L-prolyl-tRNA(Pro) + AMP + diphosphate</text>
        <dbReference type="Rhea" id="RHEA:14305"/>
        <dbReference type="Rhea" id="RHEA-COMP:9700"/>
        <dbReference type="Rhea" id="RHEA-COMP:9702"/>
        <dbReference type="ChEBI" id="CHEBI:30616"/>
        <dbReference type="ChEBI" id="CHEBI:33019"/>
        <dbReference type="ChEBI" id="CHEBI:60039"/>
        <dbReference type="ChEBI" id="CHEBI:78442"/>
        <dbReference type="ChEBI" id="CHEBI:78532"/>
        <dbReference type="ChEBI" id="CHEBI:456215"/>
        <dbReference type="EC" id="6.1.1.15"/>
    </reaction>
</comment>
<comment type="subunit">
    <text evidence="1">Homodimer.</text>
</comment>
<comment type="subcellular location">
    <subcellularLocation>
        <location evidence="1">Cytoplasm</location>
    </subcellularLocation>
</comment>
<comment type="domain">
    <text evidence="1">Consists of three domains: the N-terminal catalytic domain, the editing domain and the C-terminal anticodon-binding domain.</text>
</comment>
<comment type="similarity">
    <text evidence="1">Belongs to the class-II aminoacyl-tRNA synthetase family. ProS type 1 subfamily.</text>
</comment>
<name>SYP_HAEI8</name>
<keyword id="KW-0030">Aminoacyl-tRNA synthetase</keyword>
<keyword id="KW-0067">ATP-binding</keyword>
<keyword id="KW-0963">Cytoplasm</keyword>
<keyword id="KW-0436">Ligase</keyword>
<keyword id="KW-0547">Nucleotide-binding</keyword>
<keyword id="KW-0648">Protein biosynthesis</keyword>
<feature type="chain" id="PRO_0000248701" description="Proline--tRNA ligase">
    <location>
        <begin position="1"/>
        <end position="572"/>
    </location>
</feature>
<reference key="1">
    <citation type="journal article" date="2005" name="J. Bacteriol.">
        <title>Genomic sequence of an otitis media isolate of nontypeable Haemophilus influenzae: comparative study with H. influenzae serotype d, strain KW20.</title>
        <authorList>
            <person name="Harrison A."/>
            <person name="Dyer D.W."/>
            <person name="Gillaspy A."/>
            <person name="Ray W.C."/>
            <person name="Mungur R."/>
            <person name="Carson M.B."/>
            <person name="Zhong H."/>
            <person name="Gipson J."/>
            <person name="Gipson M."/>
            <person name="Johnson L.S."/>
            <person name="Lewis L."/>
            <person name="Bakaletz L.O."/>
            <person name="Munson R.S. Jr."/>
        </authorList>
    </citation>
    <scope>NUCLEOTIDE SEQUENCE [LARGE SCALE GENOMIC DNA]</scope>
    <source>
        <strain>86-028NP</strain>
    </source>
</reference>
<sequence>MRTSQYLFSTLKETPNDAQVVSHQLMLRAGMIRPMASGLYNWLPTGIRVLKKVEKVVREEMNKGGAIEVLMPVVQPAELWEESGRWDQYGPELLRFEDRGNRNFVLGPTHEEVITDLVRREVSSYKQLPLNLYQIQTKFRDEVRPRFGVMRSREFIMKDAYSFHTTQESLQATYDVMYQVYSNIFRRLGLDFRAVQADTGSIGGSASHEFQVLASSGEDDVVFSTESDFAANIELAEAIAIGERQAPTAEMCLVDTPNAKTIAELVEQFNLPIEKTVKTLIVKGADENQPLVALIIRGDHELNEIKAQKHPLVADPLEFADETEIKAKIGAGVGSLGAVNLNIPAIIDRTVALMSDFSCGANIDGKHYFNVNWVRDVAMPEVFDLRNVVEGDPSPDGKGTLQIKRGIEVGHIFQLGKKYSEAMKATVQGEDGKPLVMTMGCYGIGVTRVVASAIEQHHDDRGIIWPSDEIAPFTVAIVPMNMHKSEAVQKYAEELYRTLQSQGVDVIFDDRKERPGVMFADMELIGIPHMVVIGEKNLDNGEIEYKNRRTGEKEMISKDKLLSVLNEKLGNL</sequence>